<keyword id="KW-0067">ATP-binding</keyword>
<keyword id="KW-1003">Cell membrane</keyword>
<keyword id="KW-0406">Ion transport</keyword>
<keyword id="KW-0460">Magnesium</keyword>
<keyword id="KW-0472">Membrane</keyword>
<keyword id="KW-0479">Metal-binding</keyword>
<keyword id="KW-0547">Nucleotide-binding</keyword>
<keyword id="KW-0597">Phosphoprotein</keyword>
<keyword id="KW-0630">Potassium</keyword>
<keyword id="KW-0633">Potassium transport</keyword>
<keyword id="KW-1185">Reference proteome</keyword>
<keyword id="KW-0915">Sodium</keyword>
<keyword id="KW-0739">Sodium transport</keyword>
<keyword id="KW-0740">Sodium/potassium transport</keyword>
<keyword id="KW-1278">Translocase</keyword>
<keyword id="KW-0812">Transmembrane</keyword>
<keyword id="KW-1133">Transmembrane helix</keyword>
<keyword id="KW-0813">Transport</keyword>
<evidence type="ECO:0000250" key="1"/>
<evidence type="ECO:0000250" key="2">
    <source>
        <dbReference type="UniProtKB" id="P05023"/>
    </source>
</evidence>
<evidence type="ECO:0000255" key="3"/>
<evidence type="ECO:0000256" key="4">
    <source>
        <dbReference type="SAM" id="MobiDB-lite"/>
    </source>
</evidence>
<evidence type="ECO:0000305" key="5"/>
<feature type="propeptide" id="PRO_0000002493">
    <location>
        <begin position="1"/>
        <end position="5"/>
    </location>
</feature>
<feature type="chain" id="PRO_0000002494" description="Sodium/potassium-transporting ATPase subunit alpha-1">
    <location>
        <begin position="6"/>
        <end position="1021"/>
    </location>
</feature>
<feature type="topological domain" description="Cytoplasmic" evidence="3">
    <location>
        <begin position="6"/>
        <end position="85"/>
    </location>
</feature>
<feature type="transmembrane region" description="Helical" evidence="3">
    <location>
        <begin position="86"/>
        <end position="106"/>
    </location>
</feature>
<feature type="topological domain" description="Extracellular" evidence="3">
    <location>
        <begin position="107"/>
        <end position="129"/>
    </location>
</feature>
<feature type="transmembrane region" description="Helical" evidence="3">
    <location>
        <begin position="130"/>
        <end position="150"/>
    </location>
</feature>
<feature type="topological domain" description="Cytoplasmic" evidence="3">
    <location>
        <begin position="151"/>
        <end position="286"/>
    </location>
</feature>
<feature type="transmembrane region" description="Helical" evidence="3">
    <location>
        <begin position="287"/>
        <end position="306"/>
    </location>
</feature>
<feature type="topological domain" description="Extracellular" evidence="3">
    <location>
        <begin position="307"/>
        <end position="318"/>
    </location>
</feature>
<feature type="transmembrane region" description="Helical" evidence="3">
    <location>
        <begin position="319"/>
        <end position="336"/>
    </location>
</feature>
<feature type="topological domain" description="Cytoplasmic" evidence="3">
    <location>
        <begin position="337"/>
        <end position="770"/>
    </location>
</feature>
<feature type="transmembrane region" description="Helical" evidence="3">
    <location>
        <begin position="771"/>
        <end position="790"/>
    </location>
</feature>
<feature type="topological domain" description="Extracellular" evidence="3">
    <location>
        <begin position="791"/>
        <end position="800"/>
    </location>
</feature>
<feature type="transmembrane region" description="Helical" evidence="3">
    <location>
        <begin position="801"/>
        <end position="821"/>
    </location>
</feature>
<feature type="topological domain" description="Cytoplasmic" evidence="3">
    <location>
        <begin position="822"/>
        <end position="841"/>
    </location>
</feature>
<feature type="transmembrane region" description="Helical" evidence="3">
    <location>
        <begin position="842"/>
        <end position="864"/>
    </location>
</feature>
<feature type="topological domain" description="Extracellular" evidence="3">
    <location>
        <begin position="865"/>
        <end position="916"/>
    </location>
</feature>
<feature type="transmembrane region" description="Helical" evidence="3">
    <location>
        <begin position="917"/>
        <end position="936"/>
    </location>
</feature>
<feature type="topological domain" description="Cytoplasmic" evidence="3">
    <location>
        <begin position="937"/>
        <end position="949"/>
    </location>
</feature>
<feature type="transmembrane region" description="Helical" evidence="3">
    <location>
        <begin position="950"/>
        <end position="968"/>
    </location>
</feature>
<feature type="topological domain" description="Extracellular" evidence="3">
    <location>
        <begin position="969"/>
        <end position="983"/>
    </location>
</feature>
<feature type="transmembrane region" description="Helical" evidence="3">
    <location>
        <begin position="984"/>
        <end position="1004"/>
    </location>
</feature>
<feature type="topological domain" description="Cytoplasmic" evidence="3">
    <location>
        <begin position="1005"/>
        <end position="1021"/>
    </location>
</feature>
<feature type="region of interest" description="Disordered" evidence="4">
    <location>
        <begin position="1"/>
        <end position="31"/>
    </location>
</feature>
<feature type="region of interest" description="Phosphoinositide-3 kinase binding" evidence="1">
    <location>
        <begin position="80"/>
        <end position="82"/>
    </location>
</feature>
<feature type="region of interest" description="Disordered" evidence="4">
    <location>
        <begin position="214"/>
        <end position="233"/>
    </location>
</feature>
<feature type="compositionally biased region" description="Basic and acidic residues" evidence="4">
    <location>
        <begin position="1"/>
        <end position="11"/>
    </location>
</feature>
<feature type="active site" description="4-aspartylphosphate intermediate" evidence="1">
    <location>
        <position position="374"/>
    </location>
</feature>
<feature type="binding site" evidence="1">
    <location>
        <position position="485"/>
    </location>
    <ligand>
        <name>ATP</name>
        <dbReference type="ChEBI" id="CHEBI:30616"/>
    </ligand>
</feature>
<feature type="binding site" evidence="1">
    <location>
        <position position="715"/>
    </location>
    <ligand>
        <name>Mg(2+)</name>
        <dbReference type="ChEBI" id="CHEBI:18420"/>
    </ligand>
</feature>
<feature type="binding site" evidence="1">
    <location>
        <position position="719"/>
    </location>
    <ligand>
        <name>Mg(2+)</name>
        <dbReference type="ChEBI" id="CHEBI:18420"/>
    </ligand>
</feature>
<feature type="modified residue" description="Phosphotyrosine" evidence="1">
    <location>
        <position position="10"/>
    </location>
</feature>
<feature type="modified residue" description="Phosphoserine; by PKC" evidence="1">
    <location>
        <position position="16"/>
    </location>
</feature>
<feature type="modified residue" description="Phosphoserine; by PKA" evidence="1">
    <location>
        <position position="941"/>
    </location>
</feature>
<comment type="function">
    <text evidence="2">This is the catalytic component of the active enzyme, which catalyzes the hydrolysis of ATP coupled with the exchange of sodium and potassium ions across the plasma membrane. This action creates the electrochemical gradient of sodium and potassium ions, providing the energy for active transport of various nutrients.</text>
</comment>
<comment type="catalytic activity">
    <reaction>
        <text>K(+)(out) + Na(+)(in) + ATP + H2O = K(+)(in) + Na(+)(out) + ADP + phosphate + H(+)</text>
        <dbReference type="Rhea" id="RHEA:18353"/>
        <dbReference type="ChEBI" id="CHEBI:15377"/>
        <dbReference type="ChEBI" id="CHEBI:15378"/>
        <dbReference type="ChEBI" id="CHEBI:29101"/>
        <dbReference type="ChEBI" id="CHEBI:29103"/>
        <dbReference type="ChEBI" id="CHEBI:30616"/>
        <dbReference type="ChEBI" id="CHEBI:43474"/>
        <dbReference type="ChEBI" id="CHEBI:456216"/>
        <dbReference type="EC" id="7.2.2.13"/>
    </reaction>
</comment>
<comment type="subunit">
    <text evidence="5">The sodium/potassium-transporting ATPase is composed of a catalytic alpha subunit, an auxiliary non-catalytic beta subunit and an additional regulatory subunit.</text>
</comment>
<comment type="subcellular location">
    <subcellularLocation>
        <location evidence="2">Cell membrane</location>
        <location evidence="2">Sarcolemma</location>
        <topology evidence="3">Multi-pass membrane protein</topology>
    </subcellularLocation>
</comment>
<comment type="PTM">
    <text evidence="1">Phosphorylation on Tyr-10 modulates pumping activity.</text>
</comment>
<comment type="similarity">
    <text evidence="5">Belongs to the cation transport ATPase (P-type) (TC 3.A.3) family. Type IIC subfamily.</text>
</comment>
<sequence>MGKGAGRDKYEPTATSEHGTKKKKAKERDMDELKKEISMDDHKLSLDELHRKYGTDLSRGLTTARAAEILARDGPNTLTPPPTTPEWVKFCRQLFGGFSLLLWIGSLLCFLAYGITSVMEGEPNSDNLYLGVVLAAVVIITGCFSYYQEAKSSKIMESFKNMVPQQALVVRNGEKMSINAEGVVVGDLVEVKGGDRIPADLRIISAHGCKVDNSSLTGESEPQTRSPDFSNENPLETRNIAFFSTNCVEGTAVGIVISTGDRTVMGRIASLASGLEGGKTPIAMEIEHFIHLITGVAVFLGVSFFILSLILEYTWLEAVIFLIGIIVANVPEGLLATVTVCLTLTAKRMARKNCLVKNLEAVGTLGSTSTICSDKTGTLTQNRMTVAHMWFDNQIHEADTTENQSGASFDKSSATWLALSRIAGLCNRAVFQANQENVPILKRAVAGDASESALLKCIELCCGSVKEMRERYPKVVEIPFNSTNKYQLSIHKNANAGESRHLLVMKGAPERILDRCDSILIHGKVQPLDEEIKDAFQNAYLELGGLGERVLGFCHLALPDDQFPEGFQFDTDEVNFPVEKLCFVGLMSMIDPPRAAVPDAVGKCRSAGIKVIMVTGDHPITAKAIAKGVGIISDGNETVEDIAARLNIPVSQVNPRDAKACVVHGSDLKDMTSEQLDDILLHHTEIVFARTSPQQKLIIVEGCQRQGAIVAVTGDGVNDSPALKKADIGVAMGIAGSDVSKQAADMILLDDNFASIVTGVEEGRLIFDNLKKSIAYTLTSNIPEITPFLIFIIANIPLPLGTCTILCIDLGTDMVPAISLAYEQAESDIMKRQPRNPKTDKLVNERLISMAYGQIGMIQALGGFFTYFVIMAENGFLPSGLVGIRLQWDDRWINDVEDSYGQQWTFEQRKIVEFTCHTAFFVSIVVVQWADLIICKTRRNSVFQQGMKNKILIFGLFEETALAAFLSYCPGMDVALRMYPLKPTWWFCAFPYSLLIFLYDEIRKLIIRRNPGGWVERETYY</sequence>
<protein>
    <recommendedName>
        <fullName>Sodium/potassium-transporting ATPase subunit alpha-1</fullName>
        <shortName>Na(+)/K(+) ATPase alpha-1 subunit</shortName>
        <ecNumber>7.2.2.13</ecNumber>
    </recommendedName>
    <alternativeName>
        <fullName>Sodium pump subunit alpha-1</fullName>
    </alternativeName>
</protein>
<dbReference type="EC" id="7.2.2.13"/>
<dbReference type="EMBL" id="J03230">
    <property type="protein sequence ID" value="AAA48607.1"/>
    <property type="molecule type" value="mRNA"/>
</dbReference>
<dbReference type="PIR" id="A28199">
    <property type="entry name" value="A28199"/>
</dbReference>
<dbReference type="RefSeq" id="NP_990852.1">
    <property type="nucleotide sequence ID" value="NM_205521.1"/>
</dbReference>
<dbReference type="BMRB" id="P09572"/>
<dbReference type="SMR" id="P09572"/>
<dbReference type="BioGRID" id="676774">
    <property type="interactions" value="1"/>
</dbReference>
<dbReference type="DIP" id="DIP-27N"/>
<dbReference type="FunCoup" id="P09572">
    <property type="interactions" value="1830"/>
</dbReference>
<dbReference type="IntAct" id="P09572">
    <property type="interactions" value="1"/>
</dbReference>
<dbReference type="STRING" id="9031.ENSGALP00000056482"/>
<dbReference type="PaxDb" id="9031-ENSGALP00000024150"/>
<dbReference type="GeneID" id="396530"/>
<dbReference type="KEGG" id="gga:396530"/>
<dbReference type="CTD" id="476"/>
<dbReference type="VEuPathDB" id="HostDB:geneid_396530"/>
<dbReference type="eggNOG" id="KOG0203">
    <property type="taxonomic scope" value="Eukaryota"/>
</dbReference>
<dbReference type="InParanoid" id="P09572"/>
<dbReference type="OrthoDB" id="3352408at2759"/>
<dbReference type="PhylomeDB" id="P09572"/>
<dbReference type="PRO" id="PR:P09572"/>
<dbReference type="Proteomes" id="UP000000539">
    <property type="component" value="Unassembled WGS sequence"/>
</dbReference>
<dbReference type="GO" id="GO:1990794">
    <property type="term" value="C:basolateral part of cell"/>
    <property type="evidence" value="ECO:0000314"/>
    <property type="project" value="AgBase"/>
</dbReference>
<dbReference type="GO" id="GO:0016020">
    <property type="term" value="C:membrane"/>
    <property type="evidence" value="ECO:0000250"/>
    <property type="project" value="UniProtKB"/>
</dbReference>
<dbReference type="GO" id="GO:0005886">
    <property type="term" value="C:plasma membrane"/>
    <property type="evidence" value="ECO:0000250"/>
    <property type="project" value="UniProtKB"/>
</dbReference>
<dbReference type="GO" id="GO:0042383">
    <property type="term" value="C:sarcolemma"/>
    <property type="evidence" value="ECO:0000318"/>
    <property type="project" value="GO_Central"/>
</dbReference>
<dbReference type="GO" id="GO:0005890">
    <property type="term" value="C:sodium:potassium-exchanging ATPase complex"/>
    <property type="evidence" value="ECO:0000318"/>
    <property type="project" value="GO_Central"/>
</dbReference>
<dbReference type="GO" id="GO:0005524">
    <property type="term" value="F:ATP binding"/>
    <property type="evidence" value="ECO:0007669"/>
    <property type="project" value="UniProtKB-KW"/>
</dbReference>
<dbReference type="GO" id="GO:0016887">
    <property type="term" value="F:ATP hydrolysis activity"/>
    <property type="evidence" value="ECO:0007669"/>
    <property type="project" value="InterPro"/>
</dbReference>
<dbReference type="GO" id="GO:0046872">
    <property type="term" value="F:metal ion binding"/>
    <property type="evidence" value="ECO:0007669"/>
    <property type="project" value="UniProtKB-KW"/>
</dbReference>
<dbReference type="GO" id="GO:0005391">
    <property type="term" value="F:P-type sodium:potassium-exchanging transporter activity"/>
    <property type="evidence" value="ECO:0000318"/>
    <property type="project" value="GO_Central"/>
</dbReference>
<dbReference type="GO" id="GO:0030007">
    <property type="term" value="P:intracellular potassium ion homeostasis"/>
    <property type="evidence" value="ECO:0000318"/>
    <property type="project" value="GO_Central"/>
</dbReference>
<dbReference type="GO" id="GO:0006883">
    <property type="term" value="P:intracellular sodium ion homeostasis"/>
    <property type="evidence" value="ECO:0000318"/>
    <property type="project" value="GO_Central"/>
</dbReference>
<dbReference type="GO" id="GO:1990573">
    <property type="term" value="P:potassium ion import across plasma membrane"/>
    <property type="evidence" value="ECO:0000318"/>
    <property type="project" value="GO_Central"/>
</dbReference>
<dbReference type="GO" id="GO:1902600">
    <property type="term" value="P:proton transmembrane transport"/>
    <property type="evidence" value="ECO:0000318"/>
    <property type="project" value="GO_Central"/>
</dbReference>
<dbReference type="GO" id="GO:0036376">
    <property type="term" value="P:sodium ion export across plasma membrane"/>
    <property type="evidence" value="ECO:0000318"/>
    <property type="project" value="GO_Central"/>
</dbReference>
<dbReference type="CDD" id="cd02608">
    <property type="entry name" value="P-type_ATPase_Na-K_like"/>
    <property type="match status" value="1"/>
</dbReference>
<dbReference type="FunFam" id="2.70.150.10:FF:000106">
    <property type="entry name" value="Sodium/potassium-transporting ATPase subunit alpha"/>
    <property type="match status" value="1"/>
</dbReference>
<dbReference type="FunFam" id="3.40.1110.10:FF:000001">
    <property type="entry name" value="Sodium/potassium-transporting ATPase subunit alpha"/>
    <property type="match status" value="1"/>
</dbReference>
<dbReference type="FunFam" id="3.40.50.1000:FF:000004">
    <property type="entry name" value="Sodium/potassium-transporting ATPase subunit alpha"/>
    <property type="match status" value="1"/>
</dbReference>
<dbReference type="FunFam" id="1.20.1110.10:FF:000095">
    <property type="entry name" value="Sodium/potassium-transporting ATPase subunit alpha-1"/>
    <property type="match status" value="2"/>
</dbReference>
<dbReference type="Gene3D" id="3.40.1110.10">
    <property type="entry name" value="Calcium-transporting ATPase, cytoplasmic domain N"/>
    <property type="match status" value="1"/>
</dbReference>
<dbReference type="Gene3D" id="2.70.150.10">
    <property type="entry name" value="Calcium-transporting ATPase, cytoplasmic transduction domain A"/>
    <property type="match status" value="1"/>
</dbReference>
<dbReference type="Gene3D" id="1.20.1110.10">
    <property type="entry name" value="Calcium-transporting ATPase, transmembrane domain"/>
    <property type="match status" value="1"/>
</dbReference>
<dbReference type="Gene3D" id="3.40.50.1000">
    <property type="entry name" value="HAD superfamily/HAD-like"/>
    <property type="match status" value="1"/>
</dbReference>
<dbReference type="InterPro" id="IPR006068">
    <property type="entry name" value="ATPase_P-typ_cation-transptr_C"/>
</dbReference>
<dbReference type="InterPro" id="IPR004014">
    <property type="entry name" value="ATPase_P-typ_cation-transptr_N"/>
</dbReference>
<dbReference type="InterPro" id="IPR023299">
    <property type="entry name" value="ATPase_P-typ_cyto_dom_N"/>
</dbReference>
<dbReference type="InterPro" id="IPR018303">
    <property type="entry name" value="ATPase_P-typ_P_site"/>
</dbReference>
<dbReference type="InterPro" id="IPR023298">
    <property type="entry name" value="ATPase_P-typ_TM_dom_sf"/>
</dbReference>
<dbReference type="InterPro" id="IPR008250">
    <property type="entry name" value="ATPase_P-typ_transduc_dom_A_sf"/>
</dbReference>
<dbReference type="InterPro" id="IPR050510">
    <property type="entry name" value="Cation_transp_ATPase_P-type"/>
</dbReference>
<dbReference type="InterPro" id="IPR036412">
    <property type="entry name" value="HAD-like_sf"/>
</dbReference>
<dbReference type="InterPro" id="IPR023214">
    <property type="entry name" value="HAD_sf"/>
</dbReference>
<dbReference type="InterPro" id="IPR005775">
    <property type="entry name" value="P-type_ATPase_IIC"/>
</dbReference>
<dbReference type="InterPro" id="IPR001757">
    <property type="entry name" value="P_typ_ATPase"/>
</dbReference>
<dbReference type="InterPro" id="IPR044492">
    <property type="entry name" value="P_typ_ATPase_HD_dom"/>
</dbReference>
<dbReference type="NCBIfam" id="TIGR01106">
    <property type="entry name" value="ATPase-IIC_X-K"/>
    <property type="match status" value="1"/>
</dbReference>
<dbReference type="NCBIfam" id="TIGR01494">
    <property type="entry name" value="ATPase_P-type"/>
    <property type="match status" value="2"/>
</dbReference>
<dbReference type="PANTHER" id="PTHR43294">
    <property type="entry name" value="SODIUM/POTASSIUM-TRANSPORTING ATPASE SUBUNIT ALPHA"/>
    <property type="match status" value="1"/>
</dbReference>
<dbReference type="PANTHER" id="PTHR43294:SF9">
    <property type="entry name" value="SODIUM_POTASSIUM-TRANSPORTING ATPASE SUBUNIT ALPHA-1"/>
    <property type="match status" value="1"/>
</dbReference>
<dbReference type="Pfam" id="PF13246">
    <property type="entry name" value="Cation_ATPase"/>
    <property type="match status" value="1"/>
</dbReference>
<dbReference type="Pfam" id="PF00689">
    <property type="entry name" value="Cation_ATPase_C"/>
    <property type="match status" value="1"/>
</dbReference>
<dbReference type="Pfam" id="PF00690">
    <property type="entry name" value="Cation_ATPase_N"/>
    <property type="match status" value="1"/>
</dbReference>
<dbReference type="Pfam" id="PF00122">
    <property type="entry name" value="E1-E2_ATPase"/>
    <property type="match status" value="1"/>
</dbReference>
<dbReference type="PRINTS" id="PR00119">
    <property type="entry name" value="CATATPASE"/>
</dbReference>
<dbReference type="PRINTS" id="PR00121">
    <property type="entry name" value="NAKATPASE"/>
</dbReference>
<dbReference type="SFLD" id="SFLDS00003">
    <property type="entry name" value="Haloacid_Dehalogenase"/>
    <property type="match status" value="1"/>
</dbReference>
<dbReference type="SFLD" id="SFLDF00027">
    <property type="entry name" value="p-type_atpase"/>
    <property type="match status" value="1"/>
</dbReference>
<dbReference type="SMART" id="SM00831">
    <property type="entry name" value="Cation_ATPase_N"/>
    <property type="match status" value="1"/>
</dbReference>
<dbReference type="SUPFAM" id="SSF81653">
    <property type="entry name" value="Calcium ATPase, transduction domain A"/>
    <property type="match status" value="1"/>
</dbReference>
<dbReference type="SUPFAM" id="SSF81665">
    <property type="entry name" value="Calcium ATPase, transmembrane domain M"/>
    <property type="match status" value="1"/>
</dbReference>
<dbReference type="SUPFAM" id="SSF56784">
    <property type="entry name" value="HAD-like"/>
    <property type="match status" value="1"/>
</dbReference>
<dbReference type="SUPFAM" id="SSF81660">
    <property type="entry name" value="Metal cation-transporting ATPase, ATP-binding domain N"/>
    <property type="match status" value="1"/>
</dbReference>
<dbReference type="PROSITE" id="PS00154">
    <property type="entry name" value="ATPASE_E1_E2"/>
    <property type="match status" value="1"/>
</dbReference>
<name>AT1A1_CHICK</name>
<gene>
    <name type="primary">ATP1A1</name>
</gene>
<reference key="1">
    <citation type="journal article" date="1988" name="J. Biol. Chem.">
        <title>Ouabain-sensitive (Na+ + K+)-ATPase activity expressed in mouse L cells by transfection with DNA encoding the alpha-subunit of an avian sodium pump.</title>
        <authorList>
            <person name="Takeyasu K."/>
            <person name="Tamkun M.M."/>
            <person name="Renaud K.J."/>
            <person name="Fambrough D.M."/>
        </authorList>
    </citation>
    <scope>NUCLEOTIDE SEQUENCE [MRNA]</scope>
    <source>
        <tissue>Kidney</tissue>
    </source>
</reference>
<accession>P09572</accession>
<proteinExistence type="evidence at transcript level"/>
<organism>
    <name type="scientific">Gallus gallus</name>
    <name type="common">Chicken</name>
    <dbReference type="NCBI Taxonomy" id="9031"/>
    <lineage>
        <taxon>Eukaryota</taxon>
        <taxon>Metazoa</taxon>
        <taxon>Chordata</taxon>
        <taxon>Craniata</taxon>
        <taxon>Vertebrata</taxon>
        <taxon>Euteleostomi</taxon>
        <taxon>Archelosauria</taxon>
        <taxon>Archosauria</taxon>
        <taxon>Dinosauria</taxon>
        <taxon>Saurischia</taxon>
        <taxon>Theropoda</taxon>
        <taxon>Coelurosauria</taxon>
        <taxon>Aves</taxon>
        <taxon>Neognathae</taxon>
        <taxon>Galloanserae</taxon>
        <taxon>Galliformes</taxon>
        <taxon>Phasianidae</taxon>
        <taxon>Phasianinae</taxon>
        <taxon>Gallus</taxon>
    </lineage>
</organism>